<comment type="catalytic activity">
    <reaction evidence="1">
        <text>urea + 2 H2O + H(+) = hydrogencarbonate + 2 NH4(+)</text>
        <dbReference type="Rhea" id="RHEA:20557"/>
        <dbReference type="ChEBI" id="CHEBI:15377"/>
        <dbReference type="ChEBI" id="CHEBI:15378"/>
        <dbReference type="ChEBI" id="CHEBI:16199"/>
        <dbReference type="ChEBI" id="CHEBI:17544"/>
        <dbReference type="ChEBI" id="CHEBI:28938"/>
        <dbReference type="EC" id="3.5.1.5"/>
    </reaction>
</comment>
<comment type="pathway">
    <text evidence="1">Nitrogen metabolism; urea degradation; CO(2) and NH(3) from urea (urease route): step 1/1.</text>
</comment>
<comment type="subunit">
    <text evidence="1">Heterotrimer of UreA (gamma), UreB (beta) and UreC (alpha) subunits. Three heterotrimers associate to form the active enzyme.</text>
</comment>
<comment type="subcellular location">
    <subcellularLocation>
        <location evidence="1">Cytoplasm</location>
    </subcellularLocation>
</comment>
<comment type="similarity">
    <text evidence="1">Belongs to the urease gamma subunit family.</text>
</comment>
<sequence length="100" mass="11092">MNLTPREKDKLLISMAAMVARRRLERGVKLNYPEAIALISDFVVEGARDGRPVAELMEAGAHVIGRDQVMEGIAEMIHDVQVEATFPDGTKLVTVHEPIR</sequence>
<keyword id="KW-0963">Cytoplasm</keyword>
<keyword id="KW-0378">Hydrolase</keyword>
<protein>
    <recommendedName>
        <fullName evidence="1">Urease subunit gamma</fullName>
        <ecNumber evidence="1">3.5.1.5</ecNumber>
    </recommendedName>
    <alternativeName>
        <fullName evidence="1">Urea amidohydrolase subunit gamma</fullName>
    </alternativeName>
</protein>
<accession>Q1MCV5</accession>
<evidence type="ECO:0000255" key="1">
    <source>
        <dbReference type="HAMAP-Rule" id="MF_00739"/>
    </source>
</evidence>
<proteinExistence type="inferred from homology"/>
<feature type="chain" id="PRO_1000046360" description="Urease subunit gamma">
    <location>
        <begin position="1"/>
        <end position="100"/>
    </location>
</feature>
<name>URE3_RHIJ3</name>
<dbReference type="EC" id="3.5.1.5" evidence="1"/>
<dbReference type="EMBL" id="AM236080">
    <property type="protein sequence ID" value="CAK09225.1"/>
    <property type="molecule type" value="Genomic_DNA"/>
</dbReference>
<dbReference type="RefSeq" id="WP_003561955.1">
    <property type="nucleotide sequence ID" value="NC_008380.1"/>
</dbReference>
<dbReference type="SMR" id="Q1MCV5"/>
<dbReference type="EnsemblBacteria" id="CAK09225">
    <property type="protein sequence ID" value="CAK09225"/>
    <property type="gene ID" value="RL3735"/>
</dbReference>
<dbReference type="KEGG" id="rle:RL3735"/>
<dbReference type="eggNOG" id="COG0831">
    <property type="taxonomic scope" value="Bacteria"/>
</dbReference>
<dbReference type="HOGENOM" id="CLU_145825_1_0_5"/>
<dbReference type="UniPathway" id="UPA00258">
    <property type="reaction ID" value="UER00370"/>
</dbReference>
<dbReference type="Proteomes" id="UP000006575">
    <property type="component" value="Chromosome"/>
</dbReference>
<dbReference type="GO" id="GO:0005737">
    <property type="term" value="C:cytoplasm"/>
    <property type="evidence" value="ECO:0007669"/>
    <property type="project" value="UniProtKB-SubCell"/>
</dbReference>
<dbReference type="GO" id="GO:0016151">
    <property type="term" value="F:nickel cation binding"/>
    <property type="evidence" value="ECO:0007669"/>
    <property type="project" value="InterPro"/>
</dbReference>
<dbReference type="GO" id="GO:0009039">
    <property type="term" value="F:urease activity"/>
    <property type="evidence" value="ECO:0007669"/>
    <property type="project" value="UniProtKB-UniRule"/>
</dbReference>
<dbReference type="GO" id="GO:0043419">
    <property type="term" value="P:urea catabolic process"/>
    <property type="evidence" value="ECO:0007669"/>
    <property type="project" value="UniProtKB-UniRule"/>
</dbReference>
<dbReference type="CDD" id="cd00390">
    <property type="entry name" value="Urease_gamma"/>
    <property type="match status" value="1"/>
</dbReference>
<dbReference type="Gene3D" id="3.30.280.10">
    <property type="entry name" value="Urease, gamma-like subunit"/>
    <property type="match status" value="1"/>
</dbReference>
<dbReference type="HAMAP" id="MF_00739">
    <property type="entry name" value="Urease_gamma"/>
    <property type="match status" value="1"/>
</dbReference>
<dbReference type="InterPro" id="IPR012010">
    <property type="entry name" value="Urease_gamma"/>
</dbReference>
<dbReference type="InterPro" id="IPR002026">
    <property type="entry name" value="Urease_gamma/gamma-beta_su"/>
</dbReference>
<dbReference type="InterPro" id="IPR036463">
    <property type="entry name" value="Urease_gamma_sf"/>
</dbReference>
<dbReference type="InterPro" id="IPR050069">
    <property type="entry name" value="Urease_subunit"/>
</dbReference>
<dbReference type="NCBIfam" id="NF009712">
    <property type="entry name" value="PRK13241.1"/>
    <property type="match status" value="1"/>
</dbReference>
<dbReference type="NCBIfam" id="TIGR00193">
    <property type="entry name" value="urease_gam"/>
    <property type="match status" value="1"/>
</dbReference>
<dbReference type="PANTHER" id="PTHR33569">
    <property type="entry name" value="UREASE"/>
    <property type="match status" value="1"/>
</dbReference>
<dbReference type="PANTHER" id="PTHR33569:SF1">
    <property type="entry name" value="UREASE"/>
    <property type="match status" value="1"/>
</dbReference>
<dbReference type="Pfam" id="PF00547">
    <property type="entry name" value="Urease_gamma"/>
    <property type="match status" value="1"/>
</dbReference>
<dbReference type="PIRSF" id="PIRSF001223">
    <property type="entry name" value="Urease_gamma"/>
    <property type="match status" value="1"/>
</dbReference>
<dbReference type="SUPFAM" id="SSF54111">
    <property type="entry name" value="Urease, gamma-subunit"/>
    <property type="match status" value="1"/>
</dbReference>
<reference key="1">
    <citation type="journal article" date="2006" name="Genome Biol.">
        <title>The genome of Rhizobium leguminosarum has recognizable core and accessory components.</title>
        <authorList>
            <person name="Young J.P.W."/>
            <person name="Crossman L.C."/>
            <person name="Johnston A.W.B."/>
            <person name="Thomson N.R."/>
            <person name="Ghazoui Z.F."/>
            <person name="Hull K.H."/>
            <person name="Wexler M."/>
            <person name="Curson A.R.J."/>
            <person name="Todd J.D."/>
            <person name="Poole P.S."/>
            <person name="Mauchline T.H."/>
            <person name="East A.K."/>
            <person name="Quail M.A."/>
            <person name="Churcher C."/>
            <person name="Arrowsmith C."/>
            <person name="Cherevach I."/>
            <person name="Chillingworth T."/>
            <person name="Clarke K."/>
            <person name="Cronin A."/>
            <person name="Davis P."/>
            <person name="Fraser A."/>
            <person name="Hance Z."/>
            <person name="Hauser H."/>
            <person name="Jagels K."/>
            <person name="Moule S."/>
            <person name="Mungall K."/>
            <person name="Norbertczak H."/>
            <person name="Rabbinowitsch E."/>
            <person name="Sanders M."/>
            <person name="Simmonds M."/>
            <person name="Whitehead S."/>
            <person name="Parkhill J."/>
        </authorList>
    </citation>
    <scope>NUCLEOTIDE SEQUENCE [LARGE SCALE GENOMIC DNA]</scope>
    <source>
        <strain>DSM 114642 / LMG 32736 / 3841</strain>
    </source>
</reference>
<gene>
    <name evidence="1" type="primary">ureA</name>
    <name type="ordered locus">RL3735</name>
</gene>
<organism>
    <name type="scientific">Rhizobium johnstonii (strain DSM 114642 / LMG 32736 / 3841)</name>
    <name type="common">Rhizobium leguminosarum bv. viciae</name>
    <dbReference type="NCBI Taxonomy" id="216596"/>
    <lineage>
        <taxon>Bacteria</taxon>
        <taxon>Pseudomonadati</taxon>
        <taxon>Pseudomonadota</taxon>
        <taxon>Alphaproteobacteria</taxon>
        <taxon>Hyphomicrobiales</taxon>
        <taxon>Rhizobiaceae</taxon>
        <taxon>Rhizobium/Agrobacterium group</taxon>
        <taxon>Rhizobium</taxon>
        <taxon>Rhizobium johnstonii</taxon>
    </lineage>
</organism>